<accession>A2XLF2</accession>
<accession>P13362</accession>
<accession>Q84JJ5</accession>
<protein>
    <recommendedName>
        <fullName>Actin-1</fullName>
        <ecNumber evidence="1">3.6.4.-</ecNumber>
    </recommendedName>
</protein>
<gene>
    <name type="primary">ACT1</name>
    <name type="synonym">AC1</name>
    <name type="synonym">RAC1</name>
    <name type="ORF">OsI_012895</name>
</gene>
<feature type="chain" id="PRO_0000291453" description="Actin-1">
    <location>
        <begin position="1"/>
        <end position="377"/>
    </location>
</feature>
<feature type="sequence conflict" description="In Ref. 1; CAA34356 and 2; CAA33874." evidence="2" ref="1 2">
    <original>T</original>
    <variation>Q</variation>
    <location>
        <position position="151"/>
    </location>
</feature>
<feature type="sequence conflict" description="In Ref. 1; CAA34356." evidence="2" ref="1">
    <original>I</original>
    <variation>N</variation>
    <location>
        <position position="153"/>
    </location>
</feature>
<feature type="sequence conflict" description="In Ref. 1; CAA34356." evidence="2" ref="1">
    <original>L</original>
    <variation>P</variation>
    <location>
        <position position="178"/>
    </location>
</feature>
<feature type="sequence conflict" description="In Ref. 1; CAA34356 and 2; CAA33874." evidence="2" ref="1 2">
    <original>ITA</original>
    <variation>DHC</variation>
    <location>
        <begin position="319"/>
        <end position="321"/>
    </location>
</feature>
<feature type="sequence conflict" description="In Ref. 1; CAA34356." evidence="2" ref="1">
    <original>G</original>
    <variation>D</variation>
    <location>
        <position position="368"/>
    </location>
</feature>
<comment type="function">
    <text>Actins are highly conserved proteins that are involved in various types of cell motility and are ubiquitously expressed in all eukaryotic cells.</text>
</comment>
<comment type="function">
    <text>Essential component of cell cytoskeleton; plays an important role in cytoplasmic streaming, cell shape determination, cell division, organelle movement and extension growth.</text>
</comment>
<comment type="catalytic activity">
    <reaction evidence="1">
        <text>ATP + H2O = ADP + phosphate + H(+)</text>
        <dbReference type="Rhea" id="RHEA:13065"/>
        <dbReference type="ChEBI" id="CHEBI:15377"/>
        <dbReference type="ChEBI" id="CHEBI:15378"/>
        <dbReference type="ChEBI" id="CHEBI:30616"/>
        <dbReference type="ChEBI" id="CHEBI:43474"/>
        <dbReference type="ChEBI" id="CHEBI:456216"/>
    </reaction>
</comment>
<comment type="subcellular location">
    <subcellularLocation>
        <location>Cytoplasm</location>
        <location>Cytoskeleton</location>
    </subcellularLocation>
</comment>
<comment type="miscellaneous">
    <text>There are at least eight actin genes in rice.</text>
</comment>
<comment type="similarity">
    <text evidence="2">Belongs to the actin family.</text>
</comment>
<evidence type="ECO:0000250" key="1">
    <source>
        <dbReference type="UniProtKB" id="P68137"/>
    </source>
</evidence>
<evidence type="ECO:0000305" key="2"/>
<name>ACT1_ORYSI</name>
<dbReference type="EC" id="3.6.4.-" evidence="1"/>
<dbReference type="EMBL" id="X16280">
    <property type="protein sequence ID" value="CAA34356.1"/>
    <property type="molecule type" value="mRNA"/>
</dbReference>
<dbReference type="EMBL" id="X15865">
    <property type="protein sequence ID" value="CAA33874.1"/>
    <property type="molecule type" value="Genomic_DNA"/>
</dbReference>
<dbReference type="EMBL" id="CM000128">
    <property type="protein sequence ID" value="EAY91662.1"/>
    <property type="molecule type" value="Genomic_DNA"/>
</dbReference>
<dbReference type="EMBL" id="S44221">
    <property type="protein sequence ID" value="AAD13837.1"/>
    <property type="molecule type" value="Genomic_DNA"/>
</dbReference>
<dbReference type="PIR" id="S10020">
    <property type="entry name" value="ATRZ1"/>
</dbReference>
<dbReference type="SMR" id="A2XLF2"/>
<dbReference type="STRING" id="39946.A2XLF2"/>
<dbReference type="EnsemblPlants" id="BGIOSGA013463-TA">
    <property type="protein sequence ID" value="BGIOSGA013463-PA"/>
    <property type="gene ID" value="BGIOSGA013463"/>
</dbReference>
<dbReference type="EnsemblPlants" id="OsGoSa_03g0032260.01">
    <property type="protein sequence ID" value="OsGoSa_03g0032260.01"/>
    <property type="gene ID" value="OsGoSa_03g0032260"/>
</dbReference>
<dbReference type="EnsemblPlants" id="OsIR64_03g0031830.01">
    <property type="protein sequence ID" value="OsIR64_03g0031830.01"/>
    <property type="gene ID" value="OsIR64_03g0031830"/>
</dbReference>
<dbReference type="EnsemblPlants" id="OsKYG_03g0032280.01">
    <property type="protein sequence ID" value="OsKYG_03g0032280.01"/>
    <property type="gene ID" value="OsKYG_03g0032280"/>
</dbReference>
<dbReference type="EnsemblPlants" id="OsLaMu_03g0032060.01">
    <property type="protein sequence ID" value="OsLaMu_03g0032060.01"/>
    <property type="gene ID" value="OsLaMu_03g0032060"/>
</dbReference>
<dbReference type="EnsemblPlants" id="OsLima_03g0032250.01">
    <property type="protein sequence ID" value="OsLima_03g0032250.01"/>
    <property type="gene ID" value="OsLima_03g0032250"/>
</dbReference>
<dbReference type="EnsemblPlants" id="OsLiXu_03g0032040.01">
    <property type="protein sequence ID" value="OsLiXu_03g0032040.01"/>
    <property type="gene ID" value="OsLiXu_03g0032040"/>
</dbReference>
<dbReference type="EnsemblPlants" id="OsMH63_03G032270_01">
    <property type="protein sequence ID" value="OsMH63_03G032270_01"/>
    <property type="gene ID" value="OsMH63_03G032270"/>
</dbReference>
<dbReference type="EnsemblPlants" id="OsPr106_03g0032180.01">
    <property type="protein sequence ID" value="OsPr106_03g0032180.01"/>
    <property type="gene ID" value="OsPr106_03g0032180"/>
</dbReference>
<dbReference type="EnsemblPlants" id="OsZS97_03G032180_01">
    <property type="protein sequence ID" value="OsZS97_03G032180_01"/>
    <property type="gene ID" value="OsZS97_03G032180"/>
</dbReference>
<dbReference type="Gramene" id="BGIOSGA013463-TA">
    <property type="protein sequence ID" value="BGIOSGA013463-PA"/>
    <property type="gene ID" value="BGIOSGA013463"/>
</dbReference>
<dbReference type="Gramene" id="OsGoSa_03g0032260.01">
    <property type="protein sequence ID" value="OsGoSa_03g0032260.01"/>
    <property type="gene ID" value="OsGoSa_03g0032260"/>
</dbReference>
<dbReference type="Gramene" id="OsIR64_03g0031830.01">
    <property type="protein sequence ID" value="OsIR64_03g0031830.01"/>
    <property type="gene ID" value="OsIR64_03g0031830"/>
</dbReference>
<dbReference type="Gramene" id="OsKYG_03g0032280.01">
    <property type="protein sequence ID" value="OsKYG_03g0032280.01"/>
    <property type="gene ID" value="OsKYG_03g0032280"/>
</dbReference>
<dbReference type="Gramene" id="OsLaMu_03g0032060.01">
    <property type="protein sequence ID" value="OsLaMu_03g0032060.01"/>
    <property type="gene ID" value="OsLaMu_03g0032060"/>
</dbReference>
<dbReference type="Gramene" id="OsLima_03g0032250.01">
    <property type="protein sequence ID" value="OsLima_03g0032250.01"/>
    <property type="gene ID" value="OsLima_03g0032250"/>
</dbReference>
<dbReference type="Gramene" id="OsLiXu_03g0032040.01">
    <property type="protein sequence ID" value="OsLiXu_03g0032040.01"/>
    <property type="gene ID" value="OsLiXu_03g0032040"/>
</dbReference>
<dbReference type="Gramene" id="OsMH63_03G032270_01">
    <property type="protein sequence ID" value="OsMH63_03G032270_01"/>
    <property type="gene ID" value="OsMH63_03G032270"/>
</dbReference>
<dbReference type="Gramene" id="OsPr106_03g0032180.01">
    <property type="protein sequence ID" value="OsPr106_03g0032180.01"/>
    <property type="gene ID" value="OsPr106_03g0032180"/>
</dbReference>
<dbReference type="Gramene" id="OsZS97_03G032180_01">
    <property type="protein sequence ID" value="OsZS97_03G032180_01"/>
    <property type="gene ID" value="OsZS97_03G032180"/>
</dbReference>
<dbReference type="HOGENOM" id="CLU_027965_0_2_1"/>
<dbReference type="OMA" id="FTTSAEF"/>
<dbReference type="OrthoDB" id="503831at2759"/>
<dbReference type="Proteomes" id="UP000007015">
    <property type="component" value="Chromosome 3"/>
</dbReference>
<dbReference type="GO" id="GO:0005737">
    <property type="term" value="C:cytoplasm"/>
    <property type="evidence" value="ECO:0007669"/>
    <property type="project" value="UniProtKB-KW"/>
</dbReference>
<dbReference type="GO" id="GO:0005856">
    <property type="term" value="C:cytoskeleton"/>
    <property type="evidence" value="ECO:0007669"/>
    <property type="project" value="UniProtKB-SubCell"/>
</dbReference>
<dbReference type="GO" id="GO:0005524">
    <property type="term" value="F:ATP binding"/>
    <property type="evidence" value="ECO:0007669"/>
    <property type="project" value="UniProtKB-KW"/>
</dbReference>
<dbReference type="GO" id="GO:0016787">
    <property type="term" value="F:hydrolase activity"/>
    <property type="evidence" value="ECO:0007669"/>
    <property type="project" value="UniProtKB-KW"/>
</dbReference>
<dbReference type="CDD" id="cd10224">
    <property type="entry name" value="ASKHA_NBD_actin"/>
    <property type="match status" value="1"/>
</dbReference>
<dbReference type="FunFam" id="2.30.36.70:FF:000001">
    <property type="entry name" value="Actin, alpha skeletal muscle"/>
    <property type="match status" value="1"/>
</dbReference>
<dbReference type="FunFam" id="3.30.420.40:FF:000291">
    <property type="entry name" value="Actin, alpha skeletal muscle"/>
    <property type="match status" value="1"/>
</dbReference>
<dbReference type="FunFam" id="3.90.640.10:FF:000001">
    <property type="entry name" value="Actin, muscle"/>
    <property type="match status" value="1"/>
</dbReference>
<dbReference type="FunFam" id="3.30.420.40:FF:000404">
    <property type="entry name" value="Major actin"/>
    <property type="match status" value="1"/>
</dbReference>
<dbReference type="FunFam" id="3.30.420.40:FF:000058">
    <property type="entry name" value="Putative actin-related protein 5"/>
    <property type="match status" value="1"/>
</dbReference>
<dbReference type="Gene3D" id="3.30.420.40">
    <property type="match status" value="2"/>
</dbReference>
<dbReference type="Gene3D" id="3.90.640.10">
    <property type="entry name" value="Actin, Chain A, domain 4"/>
    <property type="match status" value="1"/>
</dbReference>
<dbReference type="InterPro" id="IPR004000">
    <property type="entry name" value="Actin"/>
</dbReference>
<dbReference type="InterPro" id="IPR020902">
    <property type="entry name" value="Actin/actin-like_CS"/>
</dbReference>
<dbReference type="InterPro" id="IPR004001">
    <property type="entry name" value="Actin_CS"/>
</dbReference>
<dbReference type="InterPro" id="IPR043129">
    <property type="entry name" value="ATPase_NBD"/>
</dbReference>
<dbReference type="PANTHER" id="PTHR11937">
    <property type="entry name" value="ACTIN"/>
    <property type="match status" value="1"/>
</dbReference>
<dbReference type="Pfam" id="PF00022">
    <property type="entry name" value="Actin"/>
    <property type="match status" value="1"/>
</dbReference>
<dbReference type="PRINTS" id="PR00190">
    <property type="entry name" value="ACTIN"/>
</dbReference>
<dbReference type="SMART" id="SM00268">
    <property type="entry name" value="ACTIN"/>
    <property type="match status" value="1"/>
</dbReference>
<dbReference type="SUPFAM" id="SSF53067">
    <property type="entry name" value="Actin-like ATPase domain"/>
    <property type="match status" value="2"/>
</dbReference>
<dbReference type="PROSITE" id="PS00406">
    <property type="entry name" value="ACTINS_1"/>
    <property type="match status" value="1"/>
</dbReference>
<dbReference type="PROSITE" id="PS00432">
    <property type="entry name" value="ACTINS_2"/>
    <property type="match status" value="1"/>
</dbReference>
<dbReference type="PROSITE" id="PS01132">
    <property type="entry name" value="ACTINS_ACT_LIKE"/>
    <property type="match status" value="1"/>
</dbReference>
<reference key="1">
    <citation type="journal article" date="1990" name="Plant Mol. Biol.">
        <title>Structural characterization of a rice actin gene.</title>
        <authorList>
            <person name="McElroy D."/>
            <person name="Rothenberg M."/>
            <person name="Wu R."/>
        </authorList>
    </citation>
    <scope>NUCLEOTIDE SEQUENCE [MRNA]</scope>
    <source>
        <strain>cv. IR36</strain>
    </source>
</reference>
<reference key="2">
    <citation type="journal article" date="1990" name="Plant Mol. Biol.">
        <title>Genomic nucleotide sequence of four rice (Oryza sativa) actin genes.</title>
        <authorList>
            <person name="Reece K.S."/>
            <person name="McElroy D."/>
            <person name="Wu R."/>
        </authorList>
    </citation>
    <scope>NUCLEOTIDE SEQUENCE [GENOMIC DNA]</scope>
    <source>
        <strain>cv. IR36</strain>
    </source>
</reference>
<reference key="3">
    <citation type="journal article" date="2005" name="PLoS Biol.">
        <title>The genomes of Oryza sativa: a history of duplications.</title>
        <authorList>
            <person name="Yu J."/>
            <person name="Wang J."/>
            <person name="Lin W."/>
            <person name="Li S."/>
            <person name="Li H."/>
            <person name="Zhou J."/>
            <person name="Ni P."/>
            <person name="Dong W."/>
            <person name="Hu S."/>
            <person name="Zeng C."/>
            <person name="Zhang J."/>
            <person name="Zhang Y."/>
            <person name="Li R."/>
            <person name="Xu Z."/>
            <person name="Li S."/>
            <person name="Li X."/>
            <person name="Zheng H."/>
            <person name="Cong L."/>
            <person name="Lin L."/>
            <person name="Yin J."/>
            <person name="Geng J."/>
            <person name="Li G."/>
            <person name="Shi J."/>
            <person name="Liu J."/>
            <person name="Lv H."/>
            <person name="Li J."/>
            <person name="Wang J."/>
            <person name="Deng Y."/>
            <person name="Ran L."/>
            <person name="Shi X."/>
            <person name="Wang X."/>
            <person name="Wu Q."/>
            <person name="Li C."/>
            <person name="Ren X."/>
            <person name="Wang J."/>
            <person name="Wang X."/>
            <person name="Li D."/>
            <person name="Liu D."/>
            <person name="Zhang X."/>
            <person name="Ji Z."/>
            <person name="Zhao W."/>
            <person name="Sun Y."/>
            <person name="Zhang Z."/>
            <person name="Bao J."/>
            <person name="Han Y."/>
            <person name="Dong L."/>
            <person name="Ji J."/>
            <person name="Chen P."/>
            <person name="Wu S."/>
            <person name="Liu J."/>
            <person name="Xiao Y."/>
            <person name="Bu D."/>
            <person name="Tan J."/>
            <person name="Yang L."/>
            <person name="Ye C."/>
            <person name="Zhang J."/>
            <person name="Xu J."/>
            <person name="Zhou Y."/>
            <person name="Yu Y."/>
            <person name="Zhang B."/>
            <person name="Zhuang S."/>
            <person name="Wei H."/>
            <person name="Liu B."/>
            <person name="Lei M."/>
            <person name="Yu H."/>
            <person name="Li Y."/>
            <person name="Xu H."/>
            <person name="Wei S."/>
            <person name="He X."/>
            <person name="Fang L."/>
            <person name="Zhang Z."/>
            <person name="Zhang Y."/>
            <person name="Huang X."/>
            <person name="Su Z."/>
            <person name="Tong W."/>
            <person name="Li J."/>
            <person name="Tong Z."/>
            <person name="Li S."/>
            <person name="Ye J."/>
            <person name="Wang L."/>
            <person name="Fang L."/>
            <person name="Lei T."/>
            <person name="Chen C.-S."/>
            <person name="Chen H.-C."/>
            <person name="Xu Z."/>
            <person name="Li H."/>
            <person name="Huang H."/>
            <person name="Zhang F."/>
            <person name="Xu H."/>
            <person name="Li N."/>
            <person name="Zhao C."/>
            <person name="Li S."/>
            <person name="Dong L."/>
            <person name="Huang Y."/>
            <person name="Li L."/>
            <person name="Xi Y."/>
            <person name="Qi Q."/>
            <person name="Li W."/>
            <person name="Zhang B."/>
            <person name="Hu W."/>
            <person name="Zhang Y."/>
            <person name="Tian X."/>
            <person name="Jiao Y."/>
            <person name="Liang X."/>
            <person name="Jin J."/>
            <person name="Gao L."/>
            <person name="Zheng W."/>
            <person name="Hao B."/>
            <person name="Liu S.-M."/>
            <person name="Wang W."/>
            <person name="Yuan L."/>
            <person name="Cao M."/>
            <person name="McDermott J."/>
            <person name="Samudrala R."/>
            <person name="Wang J."/>
            <person name="Wong G.K.-S."/>
            <person name="Yang H."/>
        </authorList>
    </citation>
    <scope>NUCLEOTIDE SEQUENCE [LARGE SCALE GENOMIC DNA]</scope>
    <source>
        <strain>cv. 93-11</strain>
    </source>
</reference>
<reference key="4">
    <citation type="journal article" date="1990" name="Plant Cell">
        <title>Isolation of an efficient actin promoter for use in rice transformation.</title>
        <authorList>
            <person name="McElroy D."/>
            <person name="Zhang W."/>
            <person name="Cao J."/>
            <person name="Wu R."/>
        </authorList>
    </citation>
    <scope>NUCLEOTIDE SEQUENCE [GENOMIC DNA] OF 1-7</scope>
</reference>
<reference key="5">
    <citation type="journal article" date="1990" name="Plant Mol. Biol.">
        <title>Characterization of the rice (Oryza sativa) actin gene family.</title>
        <authorList>
            <person name="McElroy D."/>
            <person name="Rothenberg M."/>
            <person name="Reece K.S."/>
            <person name="Wu R."/>
        </authorList>
    </citation>
    <scope>GENE FAMILY</scope>
</reference>
<organism>
    <name type="scientific">Oryza sativa subsp. indica</name>
    <name type="common">Rice</name>
    <dbReference type="NCBI Taxonomy" id="39946"/>
    <lineage>
        <taxon>Eukaryota</taxon>
        <taxon>Viridiplantae</taxon>
        <taxon>Streptophyta</taxon>
        <taxon>Embryophyta</taxon>
        <taxon>Tracheophyta</taxon>
        <taxon>Spermatophyta</taxon>
        <taxon>Magnoliopsida</taxon>
        <taxon>Liliopsida</taxon>
        <taxon>Poales</taxon>
        <taxon>Poaceae</taxon>
        <taxon>BOP clade</taxon>
        <taxon>Oryzoideae</taxon>
        <taxon>Oryzeae</taxon>
        <taxon>Oryzinae</taxon>
        <taxon>Oryza</taxon>
        <taxon>Oryza sativa</taxon>
    </lineage>
</organism>
<proteinExistence type="evidence at transcript level"/>
<sequence length="377" mass="41813">MADAEDIQPLVCDNGTGMVKAGFAGDDAPRAVFPSIVGRPRHTGVMVGMGQKDAYVGDEAQSKRGILTLKYPIEHGIVSNWDDMEKIWHHTFYNELRVAPEEHPVLLTEAPLNPKANREKMTQIMFETFNTPAMYVAIQAVLSLYASGRTTGIVLDSGDGVSHTVPIYEGYALPHAILRLDLAGRDLTDYLMKILTERGYSFTTTAEREIVRDMKEKLSYIALDYDQEMETAKTSSSVEKSYELPDGQVITIGAERFRCPEVLFQPSFIGMEAAGIHETTYNSIMKCDVDIRKDLYGNIVLSGGTTMFPGIADRMSKEITALAPSSMKIKVVAPPERKYSVWIGGSILASLSTFQQMWIAKAEYDESGPSIVHRKCF</sequence>
<keyword id="KW-0067">ATP-binding</keyword>
<keyword id="KW-0963">Cytoplasm</keyword>
<keyword id="KW-0206">Cytoskeleton</keyword>
<keyword id="KW-0378">Hydrolase</keyword>
<keyword id="KW-0547">Nucleotide-binding</keyword>
<keyword id="KW-1185">Reference proteome</keyword>